<protein>
    <recommendedName>
        <fullName evidence="1">Ribosome maturation factor RimP</fullName>
    </recommendedName>
</protein>
<dbReference type="EMBL" id="CP000088">
    <property type="protein sequence ID" value="AAZ54813.1"/>
    <property type="molecule type" value="Genomic_DNA"/>
</dbReference>
<dbReference type="RefSeq" id="WP_011291222.1">
    <property type="nucleotide sequence ID" value="NC_007333.1"/>
</dbReference>
<dbReference type="SMR" id="Q47RV4"/>
<dbReference type="STRING" id="269800.Tfu_0775"/>
<dbReference type="KEGG" id="tfu:Tfu_0775"/>
<dbReference type="eggNOG" id="COG0779">
    <property type="taxonomic scope" value="Bacteria"/>
</dbReference>
<dbReference type="HOGENOM" id="CLU_070525_3_0_11"/>
<dbReference type="OrthoDB" id="9805006at2"/>
<dbReference type="GO" id="GO:0005829">
    <property type="term" value="C:cytosol"/>
    <property type="evidence" value="ECO:0007669"/>
    <property type="project" value="TreeGrafter"/>
</dbReference>
<dbReference type="GO" id="GO:0000028">
    <property type="term" value="P:ribosomal small subunit assembly"/>
    <property type="evidence" value="ECO:0007669"/>
    <property type="project" value="TreeGrafter"/>
</dbReference>
<dbReference type="GO" id="GO:0006412">
    <property type="term" value="P:translation"/>
    <property type="evidence" value="ECO:0007669"/>
    <property type="project" value="TreeGrafter"/>
</dbReference>
<dbReference type="CDD" id="cd01734">
    <property type="entry name" value="YlxS_C"/>
    <property type="match status" value="1"/>
</dbReference>
<dbReference type="Gene3D" id="3.30.300.70">
    <property type="entry name" value="RimP-like superfamily, N-terminal"/>
    <property type="match status" value="1"/>
</dbReference>
<dbReference type="HAMAP" id="MF_01077">
    <property type="entry name" value="RimP"/>
    <property type="match status" value="1"/>
</dbReference>
<dbReference type="InterPro" id="IPR003728">
    <property type="entry name" value="Ribosome_maturation_RimP"/>
</dbReference>
<dbReference type="InterPro" id="IPR028998">
    <property type="entry name" value="RimP_C"/>
</dbReference>
<dbReference type="InterPro" id="IPR028989">
    <property type="entry name" value="RimP_N"/>
</dbReference>
<dbReference type="InterPro" id="IPR035956">
    <property type="entry name" value="RimP_N_sf"/>
</dbReference>
<dbReference type="NCBIfam" id="NF000930">
    <property type="entry name" value="PRK00092.2-2"/>
    <property type="match status" value="1"/>
</dbReference>
<dbReference type="PANTHER" id="PTHR33867">
    <property type="entry name" value="RIBOSOME MATURATION FACTOR RIMP"/>
    <property type="match status" value="1"/>
</dbReference>
<dbReference type="PANTHER" id="PTHR33867:SF1">
    <property type="entry name" value="RIBOSOME MATURATION FACTOR RIMP"/>
    <property type="match status" value="1"/>
</dbReference>
<dbReference type="Pfam" id="PF17384">
    <property type="entry name" value="DUF150_C"/>
    <property type="match status" value="1"/>
</dbReference>
<dbReference type="Pfam" id="PF02576">
    <property type="entry name" value="RimP_N"/>
    <property type="match status" value="1"/>
</dbReference>
<dbReference type="SUPFAM" id="SSF75420">
    <property type="entry name" value="YhbC-like, N-terminal domain"/>
    <property type="match status" value="1"/>
</dbReference>
<keyword id="KW-0963">Cytoplasm</keyword>
<keyword id="KW-0690">Ribosome biogenesis</keyword>
<feature type="chain" id="PRO_0000229287" description="Ribosome maturation factor RimP">
    <location>
        <begin position="1"/>
        <end position="157"/>
    </location>
</feature>
<sequence>MGAQARRERLAQLVAPILAEAGLDLEGLDITPVGKRRLVRVVVDSDDGVDLERIGEVSQKISTALDEVDVMGQSPYVLEVTSPGVDRPLTEPRHWRRARGRLVHAPLVAGGQVKGRVIDADETGVTFDVDGQSQVYAFSDLGRGKVQVEFRHDDAAD</sequence>
<evidence type="ECO:0000255" key="1">
    <source>
        <dbReference type="HAMAP-Rule" id="MF_01077"/>
    </source>
</evidence>
<name>RIMP_THEFY</name>
<proteinExistence type="inferred from homology"/>
<reference key="1">
    <citation type="journal article" date="2007" name="J. Bacteriol.">
        <title>Genome sequence and analysis of the soil cellulolytic actinomycete Thermobifida fusca YX.</title>
        <authorList>
            <person name="Lykidis A."/>
            <person name="Mavromatis K."/>
            <person name="Ivanova N."/>
            <person name="Anderson I."/>
            <person name="Land M."/>
            <person name="DiBartolo G."/>
            <person name="Martinez M."/>
            <person name="Lapidus A."/>
            <person name="Lucas S."/>
            <person name="Copeland A."/>
            <person name="Richardson P."/>
            <person name="Wilson D.B."/>
            <person name="Kyrpides N."/>
        </authorList>
    </citation>
    <scope>NUCLEOTIDE SEQUENCE [LARGE SCALE GENOMIC DNA]</scope>
    <source>
        <strain>YX</strain>
    </source>
</reference>
<comment type="function">
    <text evidence="1">Required for maturation of 30S ribosomal subunits.</text>
</comment>
<comment type="subcellular location">
    <subcellularLocation>
        <location evidence="1">Cytoplasm</location>
    </subcellularLocation>
</comment>
<comment type="similarity">
    <text evidence="1">Belongs to the RimP family.</text>
</comment>
<organism>
    <name type="scientific">Thermobifida fusca (strain YX)</name>
    <dbReference type="NCBI Taxonomy" id="269800"/>
    <lineage>
        <taxon>Bacteria</taxon>
        <taxon>Bacillati</taxon>
        <taxon>Actinomycetota</taxon>
        <taxon>Actinomycetes</taxon>
        <taxon>Streptosporangiales</taxon>
        <taxon>Nocardiopsidaceae</taxon>
        <taxon>Thermobifida</taxon>
    </lineage>
</organism>
<accession>Q47RV4</accession>
<gene>
    <name evidence="1" type="primary">rimP</name>
    <name type="ordered locus">Tfu_0775</name>
</gene>